<comment type="function">
    <text evidence="1">Catalyzes the reversible oxidation of malate to oxaloacetate.</text>
</comment>
<comment type="catalytic activity">
    <reaction evidence="1">
        <text>(S)-malate + NAD(+) = oxaloacetate + NADH + H(+)</text>
        <dbReference type="Rhea" id="RHEA:21432"/>
        <dbReference type="ChEBI" id="CHEBI:15378"/>
        <dbReference type="ChEBI" id="CHEBI:15589"/>
        <dbReference type="ChEBI" id="CHEBI:16452"/>
        <dbReference type="ChEBI" id="CHEBI:57540"/>
        <dbReference type="ChEBI" id="CHEBI:57945"/>
        <dbReference type="EC" id="1.1.1.37"/>
    </reaction>
</comment>
<comment type="similarity">
    <text evidence="1">Belongs to the LDH/MDH superfamily. MDH type 2 family.</text>
</comment>
<organism>
    <name type="scientific">Leptospira interrogans serogroup Icterohaemorrhagiae serovar Lai (strain 56601)</name>
    <dbReference type="NCBI Taxonomy" id="189518"/>
    <lineage>
        <taxon>Bacteria</taxon>
        <taxon>Pseudomonadati</taxon>
        <taxon>Spirochaetota</taxon>
        <taxon>Spirochaetia</taxon>
        <taxon>Leptospirales</taxon>
        <taxon>Leptospiraceae</taxon>
        <taxon>Leptospira</taxon>
    </lineage>
</organism>
<dbReference type="EC" id="1.1.1.37" evidence="1"/>
<dbReference type="EMBL" id="AE010300">
    <property type="protein sequence ID" value="AAN49338.1"/>
    <property type="molecule type" value="Genomic_DNA"/>
</dbReference>
<dbReference type="RefSeq" id="NP_712320.1">
    <property type="nucleotide sequence ID" value="NC_004342.2"/>
</dbReference>
<dbReference type="RefSeq" id="WP_000048017.1">
    <property type="nucleotide sequence ID" value="NC_004342.2"/>
</dbReference>
<dbReference type="SMR" id="Q8F4A2"/>
<dbReference type="FunCoup" id="Q8F4A2">
    <property type="interactions" value="435"/>
</dbReference>
<dbReference type="STRING" id="189518.LA_2139"/>
<dbReference type="PaxDb" id="189518-LA_2139"/>
<dbReference type="EnsemblBacteria" id="AAN49338">
    <property type="protein sequence ID" value="AAN49338"/>
    <property type="gene ID" value="LA_2139"/>
</dbReference>
<dbReference type="KEGG" id="lil:LA_2139"/>
<dbReference type="PATRIC" id="fig|189518.3.peg.2130"/>
<dbReference type="HOGENOM" id="CLU_040727_2_0_12"/>
<dbReference type="InParanoid" id="Q8F4A2"/>
<dbReference type="OrthoDB" id="9802969at2"/>
<dbReference type="Proteomes" id="UP000001408">
    <property type="component" value="Chromosome I"/>
</dbReference>
<dbReference type="GO" id="GO:0030060">
    <property type="term" value="F:L-malate dehydrogenase (NAD+) activity"/>
    <property type="evidence" value="ECO:0000318"/>
    <property type="project" value="GO_Central"/>
</dbReference>
<dbReference type="GO" id="GO:0006108">
    <property type="term" value="P:malate metabolic process"/>
    <property type="evidence" value="ECO:0000318"/>
    <property type="project" value="GO_Central"/>
</dbReference>
<dbReference type="GO" id="GO:0006734">
    <property type="term" value="P:NADH metabolic process"/>
    <property type="evidence" value="ECO:0000318"/>
    <property type="project" value="GO_Central"/>
</dbReference>
<dbReference type="GO" id="GO:0006107">
    <property type="term" value="P:oxaloacetate metabolic process"/>
    <property type="evidence" value="ECO:0000318"/>
    <property type="project" value="GO_Central"/>
</dbReference>
<dbReference type="GO" id="GO:0006099">
    <property type="term" value="P:tricarboxylic acid cycle"/>
    <property type="evidence" value="ECO:0000318"/>
    <property type="project" value="GO_Central"/>
</dbReference>
<dbReference type="CDD" id="cd01338">
    <property type="entry name" value="MDH_chloroplast-like"/>
    <property type="match status" value="1"/>
</dbReference>
<dbReference type="FunFam" id="3.40.50.720:FF:000010">
    <property type="entry name" value="Malate dehydrogenase"/>
    <property type="match status" value="1"/>
</dbReference>
<dbReference type="FunFam" id="3.90.110.10:FF:000002">
    <property type="entry name" value="Malate dehydrogenase"/>
    <property type="match status" value="1"/>
</dbReference>
<dbReference type="Gene3D" id="3.90.110.10">
    <property type="entry name" value="Lactate dehydrogenase/glycoside hydrolase, family 4, C-terminal"/>
    <property type="match status" value="1"/>
</dbReference>
<dbReference type="Gene3D" id="3.40.50.720">
    <property type="entry name" value="NAD(P)-binding Rossmann-like Domain"/>
    <property type="match status" value="1"/>
</dbReference>
<dbReference type="HAMAP" id="MF_01517">
    <property type="entry name" value="Malate_dehydrog_2"/>
    <property type="match status" value="1"/>
</dbReference>
<dbReference type="InterPro" id="IPR001557">
    <property type="entry name" value="L-lactate/malate_DH"/>
</dbReference>
<dbReference type="InterPro" id="IPR022383">
    <property type="entry name" value="Lactate/malate_DH_C"/>
</dbReference>
<dbReference type="InterPro" id="IPR001236">
    <property type="entry name" value="Lactate/malate_DH_N"/>
</dbReference>
<dbReference type="InterPro" id="IPR015955">
    <property type="entry name" value="Lactate_DH/Glyco_Ohase_4_C"/>
</dbReference>
<dbReference type="InterPro" id="IPR001252">
    <property type="entry name" value="Malate_DH_AS"/>
</dbReference>
<dbReference type="InterPro" id="IPR010945">
    <property type="entry name" value="Malate_DH_type2"/>
</dbReference>
<dbReference type="InterPro" id="IPR036291">
    <property type="entry name" value="NAD(P)-bd_dom_sf"/>
</dbReference>
<dbReference type="NCBIfam" id="TIGR01759">
    <property type="entry name" value="MalateDH-SF1"/>
    <property type="match status" value="1"/>
</dbReference>
<dbReference type="NCBIfam" id="NF003916">
    <property type="entry name" value="PRK05442.1"/>
    <property type="match status" value="1"/>
</dbReference>
<dbReference type="PANTHER" id="PTHR23382">
    <property type="entry name" value="MALATE DEHYDROGENASE"/>
    <property type="match status" value="1"/>
</dbReference>
<dbReference type="Pfam" id="PF02866">
    <property type="entry name" value="Ldh_1_C"/>
    <property type="match status" value="1"/>
</dbReference>
<dbReference type="Pfam" id="PF00056">
    <property type="entry name" value="Ldh_1_N"/>
    <property type="match status" value="1"/>
</dbReference>
<dbReference type="PIRSF" id="PIRSF000102">
    <property type="entry name" value="Lac_mal_DH"/>
    <property type="match status" value="1"/>
</dbReference>
<dbReference type="SUPFAM" id="SSF56327">
    <property type="entry name" value="LDH C-terminal domain-like"/>
    <property type="match status" value="1"/>
</dbReference>
<dbReference type="SUPFAM" id="SSF51735">
    <property type="entry name" value="NAD(P)-binding Rossmann-fold domains"/>
    <property type="match status" value="1"/>
</dbReference>
<dbReference type="PROSITE" id="PS00068">
    <property type="entry name" value="MDH"/>
    <property type="match status" value="1"/>
</dbReference>
<protein>
    <recommendedName>
        <fullName evidence="1">Malate dehydrogenase</fullName>
        <ecNumber evidence="1">1.1.1.37</ecNumber>
    </recommendedName>
</protein>
<accession>Q8F4A2</accession>
<gene>
    <name evidence="1" type="primary">mdh</name>
    <name type="ordered locus">LA_2139</name>
</gene>
<evidence type="ECO:0000255" key="1">
    <source>
        <dbReference type="HAMAP-Rule" id="MF_01517"/>
    </source>
</evidence>
<reference key="1">
    <citation type="journal article" date="2003" name="Nature">
        <title>Unique physiological and pathogenic features of Leptospira interrogans revealed by whole-genome sequencing.</title>
        <authorList>
            <person name="Ren S.-X."/>
            <person name="Fu G."/>
            <person name="Jiang X.-G."/>
            <person name="Zeng R."/>
            <person name="Miao Y.-G."/>
            <person name="Xu H."/>
            <person name="Zhang Y.-X."/>
            <person name="Xiong H."/>
            <person name="Lu G."/>
            <person name="Lu L.-F."/>
            <person name="Jiang H.-Q."/>
            <person name="Jia J."/>
            <person name="Tu Y.-F."/>
            <person name="Jiang J.-X."/>
            <person name="Gu W.-Y."/>
            <person name="Zhang Y.-Q."/>
            <person name="Cai Z."/>
            <person name="Sheng H.-H."/>
            <person name="Yin H.-F."/>
            <person name="Zhang Y."/>
            <person name="Zhu G.-F."/>
            <person name="Wan M."/>
            <person name="Huang H.-L."/>
            <person name="Qian Z."/>
            <person name="Wang S.-Y."/>
            <person name="Ma W."/>
            <person name="Yao Z.-J."/>
            <person name="Shen Y."/>
            <person name="Qiang B.-Q."/>
            <person name="Xia Q.-C."/>
            <person name="Guo X.-K."/>
            <person name="Danchin A."/>
            <person name="Saint Girons I."/>
            <person name="Somerville R.L."/>
            <person name="Wen Y.-M."/>
            <person name="Shi M.-H."/>
            <person name="Chen Z."/>
            <person name="Xu J.-G."/>
            <person name="Zhao G.-P."/>
        </authorList>
    </citation>
    <scope>NUCLEOTIDE SEQUENCE [LARGE SCALE GENOMIC DNA]</scope>
    <source>
        <strain>56601</strain>
    </source>
</reference>
<keyword id="KW-0520">NAD</keyword>
<keyword id="KW-0560">Oxidoreductase</keyword>
<keyword id="KW-1185">Reference proteome</keyword>
<keyword id="KW-0816">Tricarboxylic acid cycle</keyword>
<feature type="chain" id="PRO_0000113375" description="Malate dehydrogenase">
    <location>
        <begin position="1"/>
        <end position="326"/>
    </location>
</feature>
<feature type="active site" description="Proton acceptor" evidence="1">
    <location>
        <position position="187"/>
    </location>
</feature>
<feature type="binding site" evidence="1">
    <location>
        <begin position="11"/>
        <end position="17"/>
    </location>
    <ligand>
        <name>NAD(+)</name>
        <dbReference type="ChEBI" id="CHEBI:57540"/>
    </ligand>
</feature>
<feature type="binding site" evidence="1">
    <location>
        <position position="92"/>
    </location>
    <ligand>
        <name>substrate</name>
    </ligand>
</feature>
<feature type="binding site" evidence="1">
    <location>
        <position position="98"/>
    </location>
    <ligand>
        <name>substrate</name>
    </ligand>
</feature>
<feature type="binding site" evidence="1">
    <location>
        <position position="105"/>
    </location>
    <ligand>
        <name>NAD(+)</name>
        <dbReference type="ChEBI" id="CHEBI:57540"/>
    </ligand>
</feature>
<feature type="binding site" evidence="1">
    <location>
        <position position="112"/>
    </location>
    <ligand>
        <name>NAD(+)</name>
        <dbReference type="ChEBI" id="CHEBI:57540"/>
    </ligand>
</feature>
<feature type="binding site" evidence="1">
    <location>
        <begin position="129"/>
        <end position="131"/>
    </location>
    <ligand>
        <name>NAD(+)</name>
        <dbReference type="ChEBI" id="CHEBI:57540"/>
    </ligand>
</feature>
<feature type="binding site" evidence="1">
    <location>
        <position position="131"/>
    </location>
    <ligand>
        <name>substrate</name>
    </ligand>
</feature>
<feature type="binding site" evidence="1">
    <location>
        <position position="162"/>
    </location>
    <ligand>
        <name>substrate</name>
    </ligand>
</feature>
<name>MDH_LEPIN</name>
<proteinExistence type="inferred from homology"/>
<sequence>MSKTVKVAVTGAAGQIGYSLLFRIASGQMFGADTAVEIQMLELEAAIPAAKGVIMELEDCAFPLLQKVTVSSDLDTAFKEINWALLVGSVPRKAGMERGDLLKINGGIFVNQGKAIEKNAASDVRILVVGNPCNTNCLIAMNNAKGISQDRWFAMTKLDENRAKSQLASKAGVPVKEVTHLGIWGNHSATQYPDFYNTKISGKPVTDVISDHEWLKGDFIKNVQQRGAEIIKARGASSAASAANGVVDTVRGIITPTAPGDCFSAAVVSDGSYGAEKGLIFGFPLKSDGKKVEIIQGISLNDFAKEKFKITHEELVSERNEVKEML</sequence>